<protein>
    <recommendedName>
        <fullName evidence="1">Ribonuclease P protein component</fullName>
        <shortName evidence="1">RNase P protein</shortName>
        <shortName evidence="1">RNaseP protein</shortName>
        <ecNumber evidence="1">3.1.26.5</ecNumber>
    </recommendedName>
    <alternativeName>
        <fullName evidence="1">Protein C5</fullName>
    </alternativeName>
</protein>
<organism>
    <name type="scientific">Nostoc sp. (strain PCC 7120 / SAG 25.82 / UTEX 2576)</name>
    <dbReference type="NCBI Taxonomy" id="103690"/>
    <lineage>
        <taxon>Bacteria</taxon>
        <taxon>Bacillati</taxon>
        <taxon>Cyanobacteriota</taxon>
        <taxon>Cyanophyceae</taxon>
        <taxon>Nostocales</taxon>
        <taxon>Nostocaceae</taxon>
        <taxon>Nostoc</taxon>
    </lineage>
</organism>
<dbReference type="EC" id="3.1.26.5" evidence="1"/>
<dbReference type="EMBL" id="BA000019">
    <property type="protein sequence ID" value="BAB75112.1"/>
    <property type="molecule type" value="Genomic_DNA"/>
</dbReference>
<dbReference type="PIR" id="AF2232">
    <property type="entry name" value="AF2232"/>
</dbReference>
<dbReference type="RefSeq" id="WP_010997563.1">
    <property type="nucleotide sequence ID" value="NZ_RSCN01000015.1"/>
</dbReference>
<dbReference type="SMR" id="Q8YRN1"/>
<dbReference type="STRING" id="103690.gene:10495452"/>
<dbReference type="KEGG" id="ana:alr3413"/>
<dbReference type="eggNOG" id="COG0594">
    <property type="taxonomic scope" value="Bacteria"/>
</dbReference>
<dbReference type="OrthoDB" id="458878at2"/>
<dbReference type="Proteomes" id="UP000002483">
    <property type="component" value="Chromosome"/>
</dbReference>
<dbReference type="GO" id="GO:0030677">
    <property type="term" value="C:ribonuclease P complex"/>
    <property type="evidence" value="ECO:0007669"/>
    <property type="project" value="TreeGrafter"/>
</dbReference>
<dbReference type="GO" id="GO:0042781">
    <property type="term" value="F:3'-tRNA processing endoribonuclease activity"/>
    <property type="evidence" value="ECO:0007669"/>
    <property type="project" value="TreeGrafter"/>
</dbReference>
<dbReference type="GO" id="GO:0004526">
    <property type="term" value="F:ribonuclease P activity"/>
    <property type="evidence" value="ECO:0007669"/>
    <property type="project" value="UniProtKB-UniRule"/>
</dbReference>
<dbReference type="GO" id="GO:0000049">
    <property type="term" value="F:tRNA binding"/>
    <property type="evidence" value="ECO:0007669"/>
    <property type="project" value="UniProtKB-UniRule"/>
</dbReference>
<dbReference type="GO" id="GO:0001682">
    <property type="term" value="P:tRNA 5'-leader removal"/>
    <property type="evidence" value="ECO:0007669"/>
    <property type="project" value="UniProtKB-UniRule"/>
</dbReference>
<dbReference type="Gene3D" id="3.30.230.10">
    <property type="match status" value="1"/>
</dbReference>
<dbReference type="HAMAP" id="MF_00227">
    <property type="entry name" value="RNase_P"/>
    <property type="match status" value="1"/>
</dbReference>
<dbReference type="InterPro" id="IPR020568">
    <property type="entry name" value="Ribosomal_Su5_D2-typ_SF"/>
</dbReference>
<dbReference type="InterPro" id="IPR014721">
    <property type="entry name" value="Ribsml_uS5_D2-typ_fold_subgr"/>
</dbReference>
<dbReference type="InterPro" id="IPR000100">
    <property type="entry name" value="RNase_P"/>
</dbReference>
<dbReference type="NCBIfam" id="TIGR00188">
    <property type="entry name" value="rnpA"/>
    <property type="match status" value="1"/>
</dbReference>
<dbReference type="PANTHER" id="PTHR33992">
    <property type="entry name" value="RIBONUCLEASE P PROTEIN COMPONENT"/>
    <property type="match status" value="1"/>
</dbReference>
<dbReference type="PANTHER" id="PTHR33992:SF1">
    <property type="entry name" value="RIBONUCLEASE P PROTEIN COMPONENT"/>
    <property type="match status" value="1"/>
</dbReference>
<dbReference type="Pfam" id="PF00825">
    <property type="entry name" value="Ribonuclease_P"/>
    <property type="match status" value="1"/>
</dbReference>
<dbReference type="SUPFAM" id="SSF54211">
    <property type="entry name" value="Ribosomal protein S5 domain 2-like"/>
    <property type="match status" value="1"/>
</dbReference>
<feature type="chain" id="PRO_0000198415" description="Ribonuclease P protein component">
    <location>
        <begin position="1"/>
        <end position="140"/>
    </location>
</feature>
<reference key="1">
    <citation type="journal article" date="2001" name="DNA Res.">
        <title>Complete genomic sequence of the filamentous nitrogen-fixing cyanobacterium Anabaena sp. strain PCC 7120.</title>
        <authorList>
            <person name="Kaneko T."/>
            <person name="Nakamura Y."/>
            <person name="Wolk C.P."/>
            <person name="Kuritz T."/>
            <person name="Sasamoto S."/>
            <person name="Watanabe A."/>
            <person name="Iriguchi M."/>
            <person name="Ishikawa A."/>
            <person name="Kawashima K."/>
            <person name="Kimura T."/>
            <person name="Kishida Y."/>
            <person name="Kohara M."/>
            <person name="Matsumoto M."/>
            <person name="Matsuno A."/>
            <person name="Muraki A."/>
            <person name="Nakazaki N."/>
            <person name="Shimpo S."/>
            <person name="Sugimoto M."/>
            <person name="Takazawa M."/>
            <person name="Yamada M."/>
            <person name="Yasuda M."/>
            <person name="Tabata S."/>
        </authorList>
    </citation>
    <scope>NUCLEOTIDE SEQUENCE [LARGE SCALE GENOMIC DNA]</scope>
    <source>
        <strain>PCC 7120 / SAG 25.82 / UTEX 2576</strain>
    </source>
</reference>
<evidence type="ECO:0000255" key="1">
    <source>
        <dbReference type="HAMAP-Rule" id="MF_00227"/>
    </source>
</evidence>
<comment type="function">
    <text evidence="1">RNaseP catalyzes the removal of the 5'-leader sequence from pre-tRNA to produce the mature 5'-terminus. It can also cleave other RNA substrates such as 4.5S RNA. The protein component plays an auxiliary but essential role in vivo by binding to the 5'-leader sequence and broadening the substrate specificity of the ribozyme.</text>
</comment>
<comment type="catalytic activity">
    <reaction evidence="1">
        <text>Endonucleolytic cleavage of RNA, removing 5'-extranucleotides from tRNA precursor.</text>
        <dbReference type="EC" id="3.1.26.5"/>
    </reaction>
</comment>
<comment type="subunit">
    <text evidence="1">Consists of a catalytic RNA component (M1 or rnpB) and a protein subunit.</text>
</comment>
<comment type="similarity">
    <text evidence="1">Belongs to the RnpA family.</text>
</comment>
<keyword id="KW-0255">Endonuclease</keyword>
<keyword id="KW-0378">Hydrolase</keyword>
<keyword id="KW-0540">Nuclease</keyword>
<keyword id="KW-1185">Reference proteome</keyword>
<keyword id="KW-0694">RNA-binding</keyword>
<keyword id="KW-0819">tRNA processing</keyword>
<proteinExistence type="inferred from homology"/>
<gene>
    <name evidence="1" type="primary">rnpA</name>
    <name type="ordered locus">alr3413</name>
</gene>
<sequence length="140" mass="15545">MALPKANRLKSRHDFQAVFREGLRRNSSHFTLRALKPSSARKSSLDTAAQTQPVDEVQNIPSTLIGVSISTKVSKRAVVRNRIKRQITAAMQQLLPRLAPGWKLVVIVKPTAAESKCGSQQFLQELEQLLAQTEVLHGHS</sequence>
<name>RNPA_NOSS1</name>
<accession>Q8YRN1</accession>